<reference key="1">
    <citation type="journal article" date="2009" name="Environ. Microbiol.">
        <title>The genome of Polaromonas naphthalenivorans strain CJ2, isolated from coal tar-contaminated sediment, reveals physiological and metabolic versatility and evolution through extensive horizontal gene transfer.</title>
        <authorList>
            <person name="Yagi J.M."/>
            <person name="Sims D."/>
            <person name="Brettin T."/>
            <person name="Bruce D."/>
            <person name="Madsen E.L."/>
        </authorList>
    </citation>
    <scope>NUCLEOTIDE SEQUENCE [LARGE SCALE GENOMIC DNA]</scope>
    <source>
        <strain>CJ2</strain>
    </source>
</reference>
<organism>
    <name type="scientific">Polaromonas naphthalenivorans (strain CJ2)</name>
    <dbReference type="NCBI Taxonomy" id="365044"/>
    <lineage>
        <taxon>Bacteria</taxon>
        <taxon>Pseudomonadati</taxon>
        <taxon>Pseudomonadota</taxon>
        <taxon>Betaproteobacteria</taxon>
        <taxon>Burkholderiales</taxon>
        <taxon>Comamonadaceae</taxon>
        <taxon>Polaromonas</taxon>
    </lineage>
</organism>
<comment type="function">
    <text evidence="1">Acts as a chaperone.</text>
</comment>
<comment type="induction">
    <text evidence="1">By stress conditions e.g. heat shock.</text>
</comment>
<comment type="similarity">
    <text evidence="1">Belongs to the heat shock protein 70 family.</text>
</comment>
<dbReference type="EMBL" id="CP000529">
    <property type="protein sequence ID" value="ABM36840.1"/>
    <property type="molecule type" value="Genomic_DNA"/>
</dbReference>
<dbReference type="RefSeq" id="WP_011800927.1">
    <property type="nucleotide sequence ID" value="NC_008781.1"/>
</dbReference>
<dbReference type="SMR" id="A1VMG2"/>
<dbReference type="STRING" id="365044.Pnap_1526"/>
<dbReference type="KEGG" id="pna:Pnap_1526"/>
<dbReference type="eggNOG" id="COG0443">
    <property type="taxonomic scope" value="Bacteria"/>
</dbReference>
<dbReference type="HOGENOM" id="CLU_005965_2_1_4"/>
<dbReference type="OrthoDB" id="9766019at2"/>
<dbReference type="Proteomes" id="UP000000644">
    <property type="component" value="Chromosome"/>
</dbReference>
<dbReference type="GO" id="GO:0005524">
    <property type="term" value="F:ATP binding"/>
    <property type="evidence" value="ECO:0007669"/>
    <property type="project" value="UniProtKB-UniRule"/>
</dbReference>
<dbReference type="GO" id="GO:0140662">
    <property type="term" value="F:ATP-dependent protein folding chaperone"/>
    <property type="evidence" value="ECO:0007669"/>
    <property type="project" value="InterPro"/>
</dbReference>
<dbReference type="GO" id="GO:0051082">
    <property type="term" value="F:unfolded protein binding"/>
    <property type="evidence" value="ECO:0007669"/>
    <property type="project" value="InterPro"/>
</dbReference>
<dbReference type="CDD" id="cd10234">
    <property type="entry name" value="ASKHA_NBD_HSP70_DnaK-like"/>
    <property type="match status" value="1"/>
</dbReference>
<dbReference type="FunFam" id="2.60.34.10:FF:000014">
    <property type="entry name" value="Chaperone protein DnaK HSP70"/>
    <property type="match status" value="1"/>
</dbReference>
<dbReference type="FunFam" id="3.30.30.30:FF:000003">
    <property type="entry name" value="Heat shock protein 9"/>
    <property type="match status" value="1"/>
</dbReference>
<dbReference type="FunFam" id="1.20.1270.10:FF:000001">
    <property type="entry name" value="Molecular chaperone DnaK"/>
    <property type="match status" value="1"/>
</dbReference>
<dbReference type="FunFam" id="3.30.420.40:FF:000004">
    <property type="entry name" value="Molecular chaperone DnaK"/>
    <property type="match status" value="1"/>
</dbReference>
<dbReference type="FunFam" id="3.90.640.10:FF:000003">
    <property type="entry name" value="Molecular chaperone DnaK"/>
    <property type="match status" value="1"/>
</dbReference>
<dbReference type="Gene3D" id="1.20.1270.10">
    <property type="match status" value="1"/>
</dbReference>
<dbReference type="Gene3D" id="3.30.420.40">
    <property type="match status" value="2"/>
</dbReference>
<dbReference type="Gene3D" id="3.90.640.10">
    <property type="entry name" value="Actin, Chain A, domain 4"/>
    <property type="match status" value="1"/>
</dbReference>
<dbReference type="Gene3D" id="2.60.34.10">
    <property type="entry name" value="Substrate Binding Domain Of DNAk, Chain A, domain 1"/>
    <property type="match status" value="1"/>
</dbReference>
<dbReference type="HAMAP" id="MF_00332">
    <property type="entry name" value="DnaK"/>
    <property type="match status" value="1"/>
</dbReference>
<dbReference type="InterPro" id="IPR043129">
    <property type="entry name" value="ATPase_NBD"/>
</dbReference>
<dbReference type="InterPro" id="IPR012725">
    <property type="entry name" value="Chaperone_DnaK"/>
</dbReference>
<dbReference type="InterPro" id="IPR018181">
    <property type="entry name" value="Heat_shock_70_CS"/>
</dbReference>
<dbReference type="InterPro" id="IPR029048">
    <property type="entry name" value="HSP70_C_sf"/>
</dbReference>
<dbReference type="InterPro" id="IPR029047">
    <property type="entry name" value="HSP70_peptide-bd_sf"/>
</dbReference>
<dbReference type="InterPro" id="IPR013126">
    <property type="entry name" value="Hsp_70_fam"/>
</dbReference>
<dbReference type="NCBIfam" id="NF001413">
    <property type="entry name" value="PRK00290.1"/>
    <property type="match status" value="1"/>
</dbReference>
<dbReference type="NCBIfam" id="NF003520">
    <property type="entry name" value="PRK05183.1"/>
    <property type="match status" value="1"/>
</dbReference>
<dbReference type="NCBIfam" id="TIGR02350">
    <property type="entry name" value="prok_dnaK"/>
    <property type="match status" value="1"/>
</dbReference>
<dbReference type="PANTHER" id="PTHR19375">
    <property type="entry name" value="HEAT SHOCK PROTEIN 70KDA"/>
    <property type="match status" value="1"/>
</dbReference>
<dbReference type="Pfam" id="PF00012">
    <property type="entry name" value="HSP70"/>
    <property type="match status" value="1"/>
</dbReference>
<dbReference type="PRINTS" id="PR00301">
    <property type="entry name" value="HEATSHOCK70"/>
</dbReference>
<dbReference type="SUPFAM" id="SSF53067">
    <property type="entry name" value="Actin-like ATPase domain"/>
    <property type="match status" value="2"/>
</dbReference>
<dbReference type="SUPFAM" id="SSF100934">
    <property type="entry name" value="Heat shock protein 70kD (HSP70), C-terminal subdomain"/>
    <property type="match status" value="1"/>
</dbReference>
<dbReference type="SUPFAM" id="SSF100920">
    <property type="entry name" value="Heat shock protein 70kD (HSP70), peptide-binding domain"/>
    <property type="match status" value="1"/>
</dbReference>
<dbReference type="PROSITE" id="PS00297">
    <property type="entry name" value="HSP70_1"/>
    <property type="match status" value="1"/>
</dbReference>
<dbReference type="PROSITE" id="PS00329">
    <property type="entry name" value="HSP70_2"/>
    <property type="match status" value="1"/>
</dbReference>
<dbReference type="PROSITE" id="PS01036">
    <property type="entry name" value="HSP70_3"/>
    <property type="match status" value="1"/>
</dbReference>
<name>DNAK_POLNA</name>
<keyword id="KW-0067">ATP-binding</keyword>
<keyword id="KW-0143">Chaperone</keyword>
<keyword id="KW-0547">Nucleotide-binding</keyword>
<keyword id="KW-0597">Phosphoprotein</keyword>
<keyword id="KW-1185">Reference proteome</keyword>
<keyword id="KW-0346">Stress response</keyword>
<gene>
    <name evidence="1" type="primary">dnaK</name>
    <name type="ordered locus">Pnap_1526</name>
</gene>
<evidence type="ECO:0000255" key="1">
    <source>
        <dbReference type="HAMAP-Rule" id="MF_00332"/>
    </source>
</evidence>
<evidence type="ECO:0000256" key="2">
    <source>
        <dbReference type="SAM" id="MobiDB-lite"/>
    </source>
</evidence>
<protein>
    <recommendedName>
        <fullName evidence="1">Chaperone protein DnaK</fullName>
    </recommendedName>
    <alternativeName>
        <fullName evidence="1">HSP70</fullName>
    </alternativeName>
    <alternativeName>
        <fullName evidence="1">Heat shock 70 kDa protein</fullName>
    </alternativeName>
    <alternativeName>
        <fullName evidence="1">Heat shock protein 70</fullName>
    </alternativeName>
</protein>
<accession>A1VMG2</accession>
<sequence>MGRIIGIDLGTTNSCVSIMEGNTPRVIENSEGARTTPSIVAYQEDGEVLVGASAKRQAVTNPKNTLYAVKRLIGRKFTEKEVQKDIGLMPYSIVPADNGDAWIEVRGKKLSAQQVSADILRKMKKTAEDYLGEPVTEAVITVPAYFNDAQRQATKDAGRIAGLDVKRIINEPTAAALAFGLDKQEKGDRKIAVYDLGGGTFDISIIEIADVDGEKQFEVLSTNGDTFLGGEDFDQRIIDFIIDEFKKDSGVNLKNDVLALQRLKEAAEKAKIELSNSAQTDINLPYITADASGPKHLNIKMTRAKLESLVEELIERTIAPCRVAVKDAGVSVGDIHDVILVGGMTRMPKVQEKVKEFFGKEPRKDVNPDEAVAVGAAIQGQVLSGDRSDVLLLDVTPLSLGIETMGGVMTKMIKKNTTIPTKFAQTFSTAEDNQPAVTIKVFQGEREIASGNKALGEFNLEGIPPASRGTPQIEVSFDIDANGILHVGAKDKGTGKENKITIKANSGLTEAEIQQMVKDAELNAEDDKKKVEFVQAKNSAEAMVHSVKKSLGEYGDKLDAGEKAKIEAAIKDMEEALKSDDKAAIEAKNAALMEASQKLGEKMYADMQSSQAAGGDAGAAAGAEHAQAKPAADDNVVDAEVKEVKKG</sequence>
<proteinExistence type="inferred from homology"/>
<feature type="chain" id="PRO_1000059627" description="Chaperone protein DnaK">
    <location>
        <begin position="1"/>
        <end position="647"/>
    </location>
</feature>
<feature type="region of interest" description="Disordered" evidence="2">
    <location>
        <begin position="606"/>
        <end position="647"/>
    </location>
</feature>
<feature type="compositionally biased region" description="Low complexity" evidence="2">
    <location>
        <begin position="612"/>
        <end position="630"/>
    </location>
</feature>
<feature type="modified residue" description="Phosphothreonine; by autocatalysis" evidence="1">
    <location>
        <position position="200"/>
    </location>
</feature>